<dbReference type="EC" id="3.2.1.52" evidence="1"/>
<dbReference type="EMBL" id="AP008229">
    <property type="protein sequence ID" value="BAE68517.1"/>
    <property type="molecule type" value="Genomic_DNA"/>
</dbReference>
<dbReference type="RefSeq" id="WP_011408256.1">
    <property type="nucleotide sequence ID" value="NC_007705.1"/>
</dbReference>
<dbReference type="SMR" id="Q2P4L0"/>
<dbReference type="CAZy" id="GH3">
    <property type="family name" value="Glycoside Hydrolase Family 3"/>
</dbReference>
<dbReference type="GeneID" id="77336764"/>
<dbReference type="KEGG" id="xom:XOO1762"/>
<dbReference type="HOGENOM" id="CLU_008392_0_0_6"/>
<dbReference type="UniPathway" id="UPA00544"/>
<dbReference type="GO" id="GO:0005737">
    <property type="term" value="C:cytoplasm"/>
    <property type="evidence" value="ECO:0007669"/>
    <property type="project" value="UniProtKB-SubCell"/>
</dbReference>
<dbReference type="GO" id="GO:0004563">
    <property type="term" value="F:beta-N-acetylhexosaminidase activity"/>
    <property type="evidence" value="ECO:0007669"/>
    <property type="project" value="UniProtKB-UniRule"/>
</dbReference>
<dbReference type="GO" id="GO:0005975">
    <property type="term" value="P:carbohydrate metabolic process"/>
    <property type="evidence" value="ECO:0007669"/>
    <property type="project" value="InterPro"/>
</dbReference>
<dbReference type="GO" id="GO:0051301">
    <property type="term" value="P:cell division"/>
    <property type="evidence" value="ECO:0007669"/>
    <property type="project" value="UniProtKB-KW"/>
</dbReference>
<dbReference type="GO" id="GO:0071555">
    <property type="term" value="P:cell wall organization"/>
    <property type="evidence" value="ECO:0007669"/>
    <property type="project" value="UniProtKB-KW"/>
</dbReference>
<dbReference type="GO" id="GO:0009252">
    <property type="term" value="P:peptidoglycan biosynthetic process"/>
    <property type="evidence" value="ECO:0007669"/>
    <property type="project" value="UniProtKB-KW"/>
</dbReference>
<dbReference type="GO" id="GO:0009254">
    <property type="term" value="P:peptidoglycan turnover"/>
    <property type="evidence" value="ECO:0007669"/>
    <property type="project" value="UniProtKB-UniRule"/>
</dbReference>
<dbReference type="GO" id="GO:0008360">
    <property type="term" value="P:regulation of cell shape"/>
    <property type="evidence" value="ECO:0007669"/>
    <property type="project" value="UniProtKB-KW"/>
</dbReference>
<dbReference type="FunFam" id="3.20.20.300:FF:000001">
    <property type="entry name" value="Beta-hexosaminidase"/>
    <property type="match status" value="1"/>
</dbReference>
<dbReference type="Gene3D" id="3.20.20.300">
    <property type="entry name" value="Glycoside hydrolase, family 3, N-terminal domain"/>
    <property type="match status" value="1"/>
</dbReference>
<dbReference type="HAMAP" id="MF_00364">
    <property type="entry name" value="NagZ"/>
    <property type="match status" value="1"/>
</dbReference>
<dbReference type="InterPro" id="IPR022956">
    <property type="entry name" value="Beta_hexosaminidase_bac"/>
</dbReference>
<dbReference type="InterPro" id="IPR019800">
    <property type="entry name" value="Glyco_hydro_3_AS"/>
</dbReference>
<dbReference type="InterPro" id="IPR001764">
    <property type="entry name" value="Glyco_hydro_3_N"/>
</dbReference>
<dbReference type="InterPro" id="IPR036962">
    <property type="entry name" value="Glyco_hydro_3_N_sf"/>
</dbReference>
<dbReference type="InterPro" id="IPR017853">
    <property type="entry name" value="Glycoside_hydrolase_SF"/>
</dbReference>
<dbReference type="InterPro" id="IPR050226">
    <property type="entry name" value="NagZ_Beta-hexosaminidase"/>
</dbReference>
<dbReference type="NCBIfam" id="NF003740">
    <property type="entry name" value="PRK05337.1"/>
    <property type="match status" value="1"/>
</dbReference>
<dbReference type="PANTHER" id="PTHR30480:SF13">
    <property type="entry name" value="BETA-HEXOSAMINIDASE"/>
    <property type="match status" value="1"/>
</dbReference>
<dbReference type="PANTHER" id="PTHR30480">
    <property type="entry name" value="BETA-HEXOSAMINIDASE-RELATED"/>
    <property type="match status" value="1"/>
</dbReference>
<dbReference type="Pfam" id="PF00933">
    <property type="entry name" value="Glyco_hydro_3"/>
    <property type="match status" value="1"/>
</dbReference>
<dbReference type="SUPFAM" id="SSF51445">
    <property type="entry name" value="(Trans)glycosidases"/>
    <property type="match status" value="1"/>
</dbReference>
<dbReference type="PROSITE" id="PS00775">
    <property type="entry name" value="GLYCOSYL_HYDROL_F3"/>
    <property type="match status" value="1"/>
</dbReference>
<feature type="chain" id="PRO_0000234931" description="Beta-hexosaminidase">
    <location>
        <begin position="1"/>
        <end position="334"/>
    </location>
</feature>
<feature type="active site" description="Proton donor/acceptor" evidence="1">
    <location>
        <position position="176"/>
    </location>
</feature>
<feature type="active site" description="Nucleophile" evidence="1">
    <location>
        <position position="247"/>
    </location>
</feature>
<feature type="binding site" evidence="1">
    <location>
        <position position="60"/>
    </location>
    <ligand>
        <name>substrate</name>
    </ligand>
</feature>
<feature type="binding site" evidence="1">
    <location>
        <position position="68"/>
    </location>
    <ligand>
        <name>substrate</name>
    </ligand>
</feature>
<feature type="binding site" evidence="1">
    <location>
        <position position="133"/>
    </location>
    <ligand>
        <name>substrate</name>
    </ligand>
</feature>
<feature type="binding site" evidence="1">
    <location>
        <begin position="163"/>
        <end position="164"/>
    </location>
    <ligand>
        <name>substrate</name>
    </ligand>
</feature>
<feature type="site" description="Important for catalytic activity" evidence="1">
    <location>
        <position position="174"/>
    </location>
</feature>
<name>NAGZ_XANOM</name>
<evidence type="ECO:0000255" key="1">
    <source>
        <dbReference type="HAMAP-Rule" id="MF_00364"/>
    </source>
</evidence>
<gene>
    <name evidence="1" type="primary">nagZ</name>
    <name type="ordered locus">XOO1762</name>
</gene>
<keyword id="KW-0131">Cell cycle</keyword>
<keyword id="KW-0132">Cell division</keyword>
<keyword id="KW-0133">Cell shape</keyword>
<keyword id="KW-0961">Cell wall biogenesis/degradation</keyword>
<keyword id="KW-0963">Cytoplasm</keyword>
<keyword id="KW-0326">Glycosidase</keyword>
<keyword id="KW-0378">Hydrolase</keyword>
<keyword id="KW-0573">Peptidoglycan synthesis</keyword>
<proteinExistence type="inferred from homology"/>
<accession>Q2P4L0</accession>
<sequence>MLLIGVAGTELSAQERDWLQHDAVAGVVLFKRNFGSRSQVVELSAAIRAAAPRPVLICVDQEGGRVQRFREGFSALAPLQSFGAQYAQAPEAALAAARAHAQLMASEVRASGVDLSFAPVVDLGRGNRAIGDRAFSDDPQIVATFTRAYVQALHGAGMAATLKHFPGHGTVLEDTHVDHASDPRPLEALQAEDLVPFVAGIEAGADAVMMAHVVYPQVAPEPAGYSQRWIEQILRGQMGFRGVVFSDDIGMAASFSAGGVAGRVHAHLDAGCDVVLVCHPELVAESLQAVQGRRLNTAALIGLIGRGALGWDGLLAGTDVSFTTPHSAHFGTTA</sequence>
<organism>
    <name type="scientific">Xanthomonas oryzae pv. oryzae (strain MAFF 311018)</name>
    <dbReference type="NCBI Taxonomy" id="342109"/>
    <lineage>
        <taxon>Bacteria</taxon>
        <taxon>Pseudomonadati</taxon>
        <taxon>Pseudomonadota</taxon>
        <taxon>Gammaproteobacteria</taxon>
        <taxon>Lysobacterales</taxon>
        <taxon>Lysobacteraceae</taxon>
        <taxon>Xanthomonas</taxon>
    </lineage>
</organism>
<protein>
    <recommendedName>
        <fullName evidence="1">Beta-hexosaminidase</fullName>
        <ecNumber evidence="1">3.2.1.52</ecNumber>
    </recommendedName>
    <alternativeName>
        <fullName evidence="1">Beta-N-acetylhexosaminidase</fullName>
    </alternativeName>
    <alternativeName>
        <fullName evidence="1">N-acetyl-beta-glucosaminidase</fullName>
    </alternativeName>
</protein>
<reference key="1">
    <citation type="journal article" date="2005" name="Jpn. Agric. Res. Q.">
        <title>Genome sequence of Xanthomonas oryzae pv. oryzae suggests contribution of large numbers of effector genes and insertion sequences to its race diversity.</title>
        <authorList>
            <person name="Ochiai H."/>
            <person name="Inoue Y."/>
            <person name="Takeya M."/>
            <person name="Sasaki A."/>
            <person name="Kaku H."/>
        </authorList>
    </citation>
    <scope>NUCLEOTIDE SEQUENCE [LARGE SCALE GENOMIC DNA]</scope>
    <source>
        <strain>MAFF 311018</strain>
    </source>
</reference>
<comment type="function">
    <text evidence="1">Plays a role in peptidoglycan recycling by cleaving the terminal beta-1,4-linked N-acetylglucosamine (GlcNAc) from peptide-linked peptidoglycan fragments, giving rise to free GlcNAc, anhydro-N-acetylmuramic acid and anhydro-N-acetylmuramic acid-linked peptides.</text>
</comment>
<comment type="catalytic activity">
    <reaction evidence="1">
        <text>Hydrolysis of terminal non-reducing N-acetyl-D-hexosamine residues in N-acetyl-beta-D-hexosaminides.</text>
        <dbReference type="EC" id="3.2.1.52"/>
    </reaction>
</comment>
<comment type="pathway">
    <text evidence="1">Cell wall biogenesis; peptidoglycan recycling.</text>
</comment>
<comment type="subcellular location">
    <subcellularLocation>
        <location evidence="1">Cytoplasm</location>
    </subcellularLocation>
</comment>
<comment type="similarity">
    <text evidence="1">Belongs to the glycosyl hydrolase 3 family. NagZ subfamily.</text>
</comment>